<reference key="1">
    <citation type="journal article" date="2009" name="PLoS Genet.">
        <title>Organised genome dynamics in the Escherichia coli species results in highly diverse adaptive paths.</title>
        <authorList>
            <person name="Touchon M."/>
            <person name="Hoede C."/>
            <person name="Tenaillon O."/>
            <person name="Barbe V."/>
            <person name="Baeriswyl S."/>
            <person name="Bidet P."/>
            <person name="Bingen E."/>
            <person name="Bonacorsi S."/>
            <person name="Bouchier C."/>
            <person name="Bouvet O."/>
            <person name="Calteau A."/>
            <person name="Chiapello H."/>
            <person name="Clermont O."/>
            <person name="Cruveiller S."/>
            <person name="Danchin A."/>
            <person name="Diard M."/>
            <person name="Dossat C."/>
            <person name="Karoui M.E."/>
            <person name="Frapy E."/>
            <person name="Garry L."/>
            <person name="Ghigo J.M."/>
            <person name="Gilles A.M."/>
            <person name="Johnson J."/>
            <person name="Le Bouguenec C."/>
            <person name="Lescat M."/>
            <person name="Mangenot S."/>
            <person name="Martinez-Jehanne V."/>
            <person name="Matic I."/>
            <person name="Nassif X."/>
            <person name="Oztas S."/>
            <person name="Petit M.A."/>
            <person name="Pichon C."/>
            <person name="Rouy Z."/>
            <person name="Ruf C.S."/>
            <person name="Schneider D."/>
            <person name="Tourret J."/>
            <person name="Vacherie B."/>
            <person name="Vallenet D."/>
            <person name="Medigue C."/>
            <person name="Rocha E.P.C."/>
            <person name="Denamur E."/>
        </authorList>
    </citation>
    <scope>NUCLEOTIDE SEQUENCE [LARGE SCALE GENOMIC DNA]</scope>
    <source>
        <strain>ED1a</strain>
    </source>
</reference>
<evidence type="ECO:0000255" key="1">
    <source>
        <dbReference type="HAMAP-Rule" id="MF_00661"/>
    </source>
</evidence>
<evidence type="ECO:0000256" key="2">
    <source>
        <dbReference type="SAM" id="MobiDB-lite"/>
    </source>
</evidence>
<proteinExistence type="inferred from homology"/>
<protein>
    <recommendedName>
        <fullName evidence="1">ATP-dependent RNA helicase RhlB</fullName>
        <ecNumber evidence="1">3.6.4.13</ecNumber>
    </recommendedName>
</protein>
<organism>
    <name type="scientific">Escherichia coli O81 (strain ED1a)</name>
    <dbReference type="NCBI Taxonomy" id="585397"/>
    <lineage>
        <taxon>Bacteria</taxon>
        <taxon>Pseudomonadati</taxon>
        <taxon>Pseudomonadota</taxon>
        <taxon>Gammaproteobacteria</taxon>
        <taxon>Enterobacterales</taxon>
        <taxon>Enterobacteriaceae</taxon>
        <taxon>Escherichia</taxon>
    </lineage>
</organism>
<feature type="chain" id="PRO_1000147582" description="ATP-dependent RNA helicase RhlB">
    <location>
        <begin position="1"/>
        <end position="421"/>
    </location>
</feature>
<feature type="domain" description="Helicase ATP-binding" evidence="1">
    <location>
        <begin position="40"/>
        <end position="219"/>
    </location>
</feature>
<feature type="domain" description="Helicase C-terminal" evidence="1">
    <location>
        <begin position="245"/>
        <end position="390"/>
    </location>
</feature>
<feature type="region of interest" description="Disordered" evidence="2">
    <location>
        <begin position="392"/>
        <end position="421"/>
    </location>
</feature>
<feature type="short sequence motif" description="Q motif">
    <location>
        <begin position="9"/>
        <end position="37"/>
    </location>
</feature>
<feature type="short sequence motif" description="DEAD box">
    <location>
        <begin position="165"/>
        <end position="168"/>
    </location>
</feature>
<feature type="compositionally biased region" description="Low complexity" evidence="2">
    <location>
        <begin position="402"/>
        <end position="414"/>
    </location>
</feature>
<feature type="binding site" evidence="1">
    <location>
        <begin position="53"/>
        <end position="60"/>
    </location>
    <ligand>
        <name>ATP</name>
        <dbReference type="ChEBI" id="CHEBI:30616"/>
    </ligand>
</feature>
<keyword id="KW-0067">ATP-binding</keyword>
<keyword id="KW-0963">Cytoplasm</keyword>
<keyword id="KW-0347">Helicase</keyword>
<keyword id="KW-0378">Hydrolase</keyword>
<keyword id="KW-0547">Nucleotide-binding</keyword>
<keyword id="KW-0694">RNA-binding</keyword>
<dbReference type="EC" id="3.6.4.13" evidence="1"/>
<dbReference type="EMBL" id="CU928162">
    <property type="protein sequence ID" value="CAR10584.2"/>
    <property type="molecule type" value="Genomic_DNA"/>
</dbReference>
<dbReference type="RefSeq" id="WP_000047499.1">
    <property type="nucleotide sequence ID" value="NC_011745.1"/>
</dbReference>
<dbReference type="SMR" id="B7MR01"/>
<dbReference type="GeneID" id="93778164"/>
<dbReference type="KEGG" id="ecq:ECED1_4465"/>
<dbReference type="HOGENOM" id="CLU_003041_1_3_6"/>
<dbReference type="Proteomes" id="UP000000748">
    <property type="component" value="Chromosome"/>
</dbReference>
<dbReference type="GO" id="GO:0005829">
    <property type="term" value="C:cytosol"/>
    <property type="evidence" value="ECO:0007669"/>
    <property type="project" value="TreeGrafter"/>
</dbReference>
<dbReference type="GO" id="GO:0005524">
    <property type="term" value="F:ATP binding"/>
    <property type="evidence" value="ECO:0007669"/>
    <property type="project" value="UniProtKB-UniRule"/>
</dbReference>
<dbReference type="GO" id="GO:0016887">
    <property type="term" value="F:ATP hydrolysis activity"/>
    <property type="evidence" value="ECO:0007669"/>
    <property type="project" value="RHEA"/>
</dbReference>
<dbReference type="GO" id="GO:0003723">
    <property type="term" value="F:RNA binding"/>
    <property type="evidence" value="ECO:0007669"/>
    <property type="project" value="UniProtKB-UniRule"/>
</dbReference>
<dbReference type="GO" id="GO:0003724">
    <property type="term" value="F:RNA helicase activity"/>
    <property type="evidence" value="ECO:0007669"/>
    <property type="project" value="UniProtKB-UniRule"/>
</dbReference>
<dbReference type="GO" id="GO:0006401">
    <property type="term" value="P:RNA catabolic process"/>
    <property type="evidence" value="ECO:0007669"/>
    <property type="project" value="UniProtKB-UniRule"/>
</dbReference>
<dbReference type="CDD" id="cd00268">
    <property type="entry name" value="DEADc"/>
    <property type="match status" value="1"/>
</dbReference>
<dbReference type="CDD" id="cd18787">
    <property type="entry name" value="SF2_C_DEAD"/>
    <property type="match status" value="1"/>
</dbReference>
<dbReference type="FunFam" id="3.40.50.300:FF:000008">
    <property type="entry name" value="ATP-dependent RNA helicase RhlB"/>
    <property type="match status" value="1"/>
</dbReference>
<dbReference type="FunFam" id="3.40.50.300:FF:000312">
    <property type="entry name" value="ATP-dependent RNA helicase RhlB"/>
    <property type="match status" value="1"/>
</dbReference>
<dbReference type="Gene3D" id="3.40.50.300">
    <property type="entry name" value="P-loop containing nucleotide triphosphate hydrolases"/>
    <property type="match status" value="2"/>
</dbReference>
<dbReference type="HAMAP" id="MF_00661">
    <property type="entry name" value="DEAD_helicase_RhlB"/>
    <property type="match status" value="1"/>
</dbReference>
<dbReference type="InterPro" id="IPR011545">
    <property type="entry name" value="DEAD/DEAH_box_helicase_dom"/>
</dbReference>
<dbReference type="InterPro" id="IPR050079">
    <property type="entry name" value="DEAD_box_RNA_helicase"/>
</dbReference>
<dbReference type="InterPro" id="IPR014001">
    <property type="entry name" value="Helicase_ATP-bd"/>
</dbReference>
<dbReference type="InterPro" id="IPR001650">
    <property type="entry name" value="Helicase_C-like"/>
</dbReference>
<dbReference type="InterPro" id="IPR027417">
    <property type="entry name" value="P-loop_NTPase"/>
</dbReference>
<dbReference type="InterPro" id="IPR000629">
    <property type="entry name" value="RNA-helicase_DEAD-box_CS"/>
</dbReference>
<dbReference type="InterPro" id="IPR023554">
    <property type="entry name" value="RNA_helicase_ATP-dep_RhlB"/>
</dbReference>
<dbReference type="InterPro" id="IPR014014">
    <property type="entry name" value="RNA_helicase_DEAD_Q_motif"/>
</dbReference>
<dbReference type="NCBIfam" id="NF003419">
    <property type="entry name" value="PRK04837.1"/>
    <property type="match status" value="1"/>
</dbReference>
<dbReference type="PANTHER" id="PTHR47959:SF10">
    <property type="entry name" value="ATP-DEPENDENT RNA HELICASE RHLB"/>
    <property type="match status" value="1"/>
</dbReference>
<dbReference type="PANTHER" id="PTHR47959">
    <property type="entry name" value="ATP-DEPENDENT RNA HELICASE RHLE-RELATED"/>
    <property type="match status" value="1"/>
</dbReference>
<dbReference type="Pfam" id="PF00270">
    <property type="entry name" value="DEAD"/>
    <property type="match status" value="1"/>
</dbReference>
<dbReference type="Pfam" id="PF00271">
    <property type="entry name" value="Helicase_C"/>
    <property type="match status" value="1"/>
</dbReference>
<dbReference type="SMART" id="SM00487">
    <property type="entry name" value="DEXDc"/>
    <property type="match status" value="1"/>
</dbReference>
<dbReference type="SMART" id="SM00490">
    <property type="entry name" value="HELICc"/>
    <property type="match status" value="1"/>
</dbReference>
<dbReference type="SUPFAM" id="SSF52540">
    <property type="entry name" value="P-loop containing nucleoside triphosphate hydrolases"/>
    <property type="match status" value="1"/>
</dbReference>
<dbReference type="PROSITE" id="PS00039">
    <property type="entry name" value="DEAD_ATP_HELICASE"/>
    <property type="match status" value="1"/>
</dbReference>
<dbReference type="PROSITE" id="PS51192">
    <property type="entry name" value="HELICASE_ATP_BIND_1"/>
    <property type="match status" value="1"/>
</dbReference>
<dbReference type="PROSITE" id="PS51194">
    <property type="entry name" value="HELICASE_CTER"/>
    <property type="match status" value="1"/>
</dbReference>
<dbReference type="PROSITE" id="PS51195">
    <property type="entry name" value="Q_MOTIF"/>
    <property type="match status" value="1"/>
</dbReference>
<sequence length="421" mass="47126">MSKTHLTEQKFSDFALHPKVVEALEKKGFHNCTPIQALALPLTLAGRDVAGQAQTGTGKTMAFLTSTFHYLLSHPAIADRKVNQPRALIMAPTRELAVQIHADAEPLAEATGLKLGLAYGGDGYDKQLKVLESGVDILIGTTGRLIDYAKQNHINLGAIQVVVLDEADRMYDLGFIKDIRWLFRRMPPANQRLNMLFSATLSYRVRELAFEQMNNAEYIEVEPEQKTGHRIKEELFYPSNEEKMRLLQTLIEEEWPDRAIIFANTKHRCEEIWGHLAADGHRVGLLTGDVAQKKRLRILDEFTRGDLDILVATDVAARGLHIPAVTHVFNYDLPDDCEDYVHRIGRTGRAGASGHSISLACEEYALNLPAIETYIGHSIPVSKYNPDALMTDLPKPLRLTRPRTGNGPRRTGAPRNRRRSG</sequence>
<accession>B7MR01</accession>
<name>RHLB_ECO81</name>
<gene>
    <name evidence="1" type="primary">rhlB</name>
    <name type="ordered locus">ECED1_4465</name>
</gene>
<comment type="function">
    <text evidence="1">DEAD-box RNA helicase involved in RNA degradation. Has RNA-dependent ATPase activity and unwinds double-stranded RNA.</text>
</comment>
<comment type="catalytic activity">
    <reaction evidence="1">
        <text>ATP + H2O = ADP + phosphate + H(+)</text>
        <dbReference type="Rhea" id="RHEA:13065"/>
        <dbReference type="ChEBI" id="CHEBI:15377"/>
        <dbReference type="ChEBI" id="CHEBI:15378"/>
        <dbReference type="ChEBI" id="CHEBI:30616"/>
        <dbReference type="ChEBI" id="CHEBI:43474"/>
        <dbReference type="ChEBI" id="CHEBI:456216"/>
        <dbReference type="EC" id="3.6.4.13"/>
    </reaction>
</comment>
<comment type="subunit">
    <text evidence="1">Component of the RNA degradosome, which is a multiprotein complex involved in RNA processing and mRNA degradation.</text>
</comment>
<comment type="subcellular location">
    <subcellularLocation>
        <location evidence="1">Cytoplasm</location>
    </subcellularLocation>
</comment>
<comment type="similarity">
    <text evidence="1">Belongs to the DEAD box helicase family. RhlB subfamily.</text>
</comment>